<comment type="similarity">
    <text evidence="1">Belongs to the AMN1 family.</text>
</comment>
<sequence>MATIDSLMSLCAFSVAQRAEKYEDIRMLPASVKDRLLRIMTSYGTVTDSNISQLVHSGTHTLDLQNCKISDSALKQINSLHLRTILLRGCAEITSEGLEVLAPRCPYLQVVDLTGCTAVTDSGIQALARHCKCLEVISLRGCSALSDKALLELGGNCKMLHSIYFSGTEVTDQGVIGLATGVCSCSLKELQMVRCRNLTDLAVTAVLTNCANIRIFNFHGCPLITDKSREALQNLIGPNKIQQVSWTVY</sequence>
<accession>Q0P4D1</accession>
<reference key="1">
    <citation type="submission" date="2006-08" db="EMBL/GenBank/DDBJ databases">
        <authorList>
            <consortium name="NIH - Zebrafish Gene Collection (ZGC) project"/>
        </authorList>
    </citation>
    <scope>NUCLEOTIDE SEQUENCE [LARGE SCALE MRNA]</scope>
    <source>
        <tissue>Brain</tissue>
    </source>
</reference>
<organism>
    <name type="scientific">Danio rerio</name>
    <name type="common">Zebrafish</name>
    <name type="synonym">Brachydanio rerio</name>
    <dbReference type="NCBI Taxonomy" id="7955"/>
    <lineage>
        <taxon>Eukaryota</taxon>
        <taxon>Metazoa</taxon>
        <taxon>Chordata</taxon>
        <taxon>Craniata</taxon>
        <taxon>Vertebrata</taxon>
        <taxon>Euteleostomi</taxon>
        <taxon>Actinopterygii</taxon>
        <taxon>Neopterygii</taxon>
        <taxon>Teleostei</taxon>
        <taxon>Ostariophysi</taxon>
        <taxon>Cypriniformes</taxon>
        <taxon>Danionidae</taxon>
        <taxon>Danioninae</taxon>
        <taxon>Danio</taxon>
    </lineage>
</organism>
<gene>
    <name type="primary">amn1</name>
    <name type="ORF">zgc:153121</name>
</gene>
<dbReference type="EMBL" id="BC122149">
    <property type="protein sequence ID" value="AAI22150.1"/>
    <property type="molecule type" value="mRNA"/>
</dbReference>
<dbReference type="RefSeq" id="NP_001038919.1">
    <property type="nucleotide sequence ID" value="NM_001045454.1"/>
</dbReference>
<dbReference type="SMR" id="Q0P4D1"/>
<dbReference type="FunCoup" id="Q0P4D1">
    <property type="interactions" value="171"/>
</dbReference>
<dbReference type="STRING" id="7955.ENSDARP00000069636"/>
<dbReference type="PaxDb" id="7955-ENSDARP00000069636"/>
<dbReference type="Ensembl" id="ENSDART00000075151">
    <property type="protein sequence ID" value="ENSDARP00000069636"/>
    <property type="gene ID" value="ENSDARG00000070478"/>
</dbReference>
<dbReference type="Ensembl" id="ENSDART00000189022">
    <property type="protein sequence ID" value="ENSDARP00000150761"/>
    <property type="gene ID" value="ENSDARG00000111705"/>
</dbReference>
<dbReference type="GeneID" id="751744"/>
<dbReference type="KEGG" id="dre:751744"/>
<dbReference type="AGR" id="ZFIN:ZDB-GENE-060825-13"/>
<dbReference type="CTD" id="196394"/>
<dbReference type="ZFIN" id="ZDB-GENE-060825-13">
    <property type="gene designation" value="amn1"/>
</dbReference>
<dbReference type="eggNOG" id="KOG1947">
    <property type="taxonomic scope" value="Eukaryota"/>
</dbReference>
<dbReference type="HOGENOM" id="CLU_087966_0_0_1"/>
<dbReference type="InParanoid" id="Q0P4D1"/>
<dbReference type="OMA" id="DIPYKCR"/>
<dbReference type="OrthoDB" id="10257471at2759"/>
<dbReference type="PhylomeDB" id="Q0P4D1"/>
<dbReference type="PRO" id="PR:Q0P4D1"/>
<dbReference type="Proteomes" id="UP000000437">
    <property type="component" value="Alternate scaffold 25"/>
</dbReference>
<dbReference type="Proteomes" id="UP000000437">
    <property type="component" value="Chromosome 25"/>
</dbReference>
<dbReference type="Bgee" id="ENSDARG00000070478">
    <property type="expression patterns" value="Expressed in mature ovarian follicle and 20 other cell types or tissues"/>
</dbReference>
<dbReference type="ExpressionAtlas" id="Q0P4D1">
    <property type="expression patterns" value="baseline and differential"/>
</dbReference>
<dbReference type="GO" id="GO:0019005">
    <property type="term" value="C:SCF ubiquitin ligase complex"/>
    <property type="evidence" value="ECO:0000318"/>
    <property type="project" value="GO_Central"/>
</dbReference>
<dbReference type="GO" id="GO:0031146">
    <property type="term" value="P:SCF-dependent proteasomal ubiquitin-dependent protein catabolic process"/>
    <property type="evidence" value="ECO:0000318"/>
    <property type="project" value="GO_Central"/>
</dbReference>
<dbReference type="CDD" id="cd09293">
    <property type="entry name" value="AMN1"/>
    <property type="match status" value="1"/>
</dbReference>
<dbReference type="Gene3D" id="3.80.10.10">
    <property type="entry name" value="Ribonuclease Inhibitor"/>
    <property type="match status" value="1"/>
</dbReference>
<dbReference type="InterPro" id="IPR001611">
    <property type="entry name" value="Leu-rich_rpt"/>
</dbReference>
<dbReference type="InterPro" id="IPR006553">
    <property type="entry name" value="Leu-rich_rpt_Cys-con_subtyp"/>
</dbReference>
<dbReference type="InterPro" id="IPR032675">
    <property type="entry name" value="LRR_dom_sf"/>
</dbReference>
<dbReference type="PANTHER" id="PTHR13318">
    <property type="entry name" value="PARTNER OF PAIRED, ISOFORM B-RELATED"/>
    <property type="match status" value="1"/>
</dbReference>
<dbReference type="PANTHER" id="PTHR13318:SF254">
    <property type="entry name" value="PROTEIN AMN1 HOMOLOG"/>
    <property type="match status" value="1"/>
</dbReference>
<dbReference type="Pfam" id="PF13516">
    <property type="entry name" value="LRR_6"/>
    <property type="match status" value="2"/>
</dbReference>
<dbReference type="SMART" id="SM00367">
    <property type="entry name" value="LRR_CC"/>
    <property type="match status" value="6"/>
</dbReference>
<dbReference type="SUPFAM" id="SSF52047">
    <property type="entry name" value="RNI-like"/>
    <property type="match status" value="1"/>
</dbReference>
<protein>
    <recommendedName>
        <fullName>Protein AMN1 homolog</fullName>
    </recommendedName>
</protein>
<feature type="chain" id="PRO_0000289276" description="Protein AMN1 homolog">
    <location>
        <begin position="1"/>
        <end position="249"/>
    </location>
</feature>
<keyword id="KW-1185">Reference proteome</keyword>
<name>AMN1_DANRE</name>
<evidence type="ECO:0000305" key="1"/>
<proteinExistence type="evidence at transcript level"/>